<proteinExistence type="inferred from homology"/>
<keyword id="KW-0004">4Fe-4S</keyword>
<keyword id="KW-0408">Iron</keyword>
<keyword id="KW-0411">Iron-sulfur</keyword>
<keyword id="KW-0414">Isoprene biosynthesis</keyword>
<keyword id="KW-0479">Metal-binding</keyword>
<keyword id="KW-0560">Oxidoreductase</keyword>
<reference key="1">
    <citation type="journal article" date="2005" name="Jpn. Agric. Res. Q.">
        <title>Genome sequence of Xanthomonas oryzae pv. oryzae suggests contribution of large numbers of effector genes and insertion sequences to its race diversity.</title>
        <authorList>
            <person name="Ochiai H."/>
            <person name="Inoue Y."/>
            <person name="Takeya M."/>
            <person name="Sasaki A."/>
            <person name="Kaku H."/>
        </authorList>
    </citation>
    <scope>NUCLEOTIDE SEQUENCE [LARGE SCALE GENOMIC DNA]</scope>
    <source>
        <strain>MAFF 311018</strain>
    </source>
</reference>
<feature type="chain" id="PRO_1000021195" description="4-hydroxy-3-methylbut-2-enyl diphosphate reductase">
    <location>
        <begin position="1"/>
        <end position="316"/>
    </location>
</feature>
<feature type="active site" description="Proton donor" evidence="1">
    <location>
        <position position="126"/>
    </location>
</feature>
<feature type="binding site" evidence="1">
    <location>
        <position position="12"/>
    </location>
    <ligand>
        <name>[4Fe-4S] cluster</name>
        <dbReference type="ChEBI" id="CHEBI:49883"/>
    </ligand>
</feature>
<feature type="binding site" evidence="1">
    <location>
        <position position="41"/>
    </location>
    <ligand>
        <name>(2E)-4-hydroxy-3-methylbut-2-enyl diphosphate</name>
        <dbReference type="ChEBI" id="CHEBI:128753"/>
    </ligand>
</feature>
<feature type="binding site" evidence="1">
    <location>
        <position position="41"/>
    </location>
    <ligand>
        <name>dimethylallyl diphosphate</name>
        <dbReference type="ChEBI" id="CHEBI:57623"/>
    </ligand>
</feature>
<feature type="binding site" evidence="1">
    <location>
        <position position="41"/>
    </location>
    <ligand>
        <name>isopentenyl diphosphate</name>
        <dbReference type="ChEBI" id="CHEBI:128769"/>
    </ligand>
</feature>
<feature type="binding site" evidence="1">
    <location>
        <position position="74"/>
    </location>
    <ligand>
        <name>(2E)-4-hydroxy-3-methylbut-2-enyl diphosphate</name>
        <dbReference type="ChEBI" id="CHEBI:128753"/>
    </ligand>
</feature>
<feature type="binding site" evidence="1">
    <location>
        <position position="74"/>
    </location>
    <ligand>
        <name>dimethylallyl diphosphate</name>
        <dbReference type="ChEBI" id="CHEBI:57623"/>
    </ligand>
</feature>
<feature type="binding site" evidence="1">
    <location>
        <position position="74"/>
    </location>
    <ligand>
        <name>isopentenyl diphosphate</name>
        <dbReference type="ChEBI" id="CHEBI:128769"/>
    </ligand>
</feature>
<feature type="binding site" evidence="1">
    <location>
        <position position="96"/>
    </location>
    <ligand>
        <name>[4Fe-4S] cluster</name>
        <dbReference type="ChEBI" id="CHEBI:49883"/>
    </ligand>
</feature>
<feature type="binding site" evidence="1">
    <location>
        <position position="124"/>
    </location>
    <ligand>
        <name>(2E)-4-hydroxy-3-methylbut-2-enyl diphosphate</name>
        <dbReference type="ChEBI" id="CHEBI:128753"/>
    </ligand>
</feature>
<feature type="binding site" evidence="1">
    <location>
        <position position="124"/>
    </location>
    <ligand>
        <name>dimethylallyl diphosphate</name>
        <dbReference type="ChEBI" id="CHEBI:57623"/>
    </ligand>
</feature>
<feature type="binding site" evidence="1">
    <location>
        <position position="124"/>
    </location>
    <ligand>
        <name>isopentenyl diphosphate</name>
        <dbReference type="ChEBI" id="CHEBI:128769"/>
    </ligand>
</feature>
<feature type="binding site" evidence="1">
    <location>
        <position position="169"/>
    </location>
    <ligand>
        <name>(2E)-4-hydroxy-3-methylbut-2-enyl diphosphate</name>
        <dbReference type="ChEBI" id="CHEBI:128753"/>
    </ligand>
</feature>
<feature type="binding site" evidence="1">
    <location>
        <position position="199"/>
    </location>
    <ligand>
        <name>[4Fe-4S] cluster</name>
        <dbReference type="ChEBI" id="CHEBI:49883"/>
    </ligand>
</feature>
<feature type="binding site" evidence="1">
    <location>
        <position position="227"/>
    </location>
    <ligand>
        <name>(2E)-4-hydroxy-3-methylbut-2-enyl diphosphate</name>
        <dbReference type="ChEBI" id="CHEBI:128753"/>
    </ligand>
</feature>
<feature type="binding site" evidence="1">
    <location>
        <position position="227"/>
    </location>
    <ligand>
        <name>dimethylallyl diphosphate</name>
        <dbReference type="ChEBI" id="CHEBI:57623"/>
    </ligand>
</feature>
<feature type="binding site" evidence="1">
    <location>
        <position position="227"/>
    </location>
    <ligand>
        <name>isopentenyl diphosphate</name>
        <dbReference type="ChEBI" id="CHEBI:128769"/>
    </ligand>
</feature>
<feature type="binding site" evidence="1">
    <location>
        <position position="228"/>
    </location>
    <ligand>
        <name>(2E)-4-hydroxy-3-methylbut-2-enyl diphosphate</name>
        <dbReference type="ChEBI" id="CHEBI:128753"/>
    </ligand>
</feature>
<feature type="binding site" evidence="1">
    <location>
        <position position="228"/>
    </location>
    <ligand>
        <name>dimethylallyl diphosphate</name>
        <dbReference type="ChEBI" id="CHEBI:57623"/>
    </ligand>
</feature>
<feature type="binding site" evidence="1">
    <location>
        <position position="228"/>
    </location>
    <ligand>
        <name>isopentenyl diphosphate</name>
        <dbReference type="ChEBI" id="CHEBI:128769"/>
    </ligand>
</feature>
<feature type="binding site" evidence="1">
    <location>
        <position position="229"/>
    </location>
    <ligand>
        <name>(2E)-4-hydroxy-3-methylbut-2-enyl diphosphate</name>
        <dbReference type="ChEBI" id="CHEBI:128753"/>
    </ligand>
</feature>
<feature type="binding site" evidence="1">
    <location>
        <position position="229"/>
    </location>
    <ligand>
        <name>dimethylallyl diphosphate</name>
        <dbReference type="ChEBI" id="CHEBI:57623"/>
    </ligand>
</feature>
<feature type="binding site" evidence="1">
    <location>
        <position position="229"/>
    </location>
    <ligand>
        <name>isopentenyl diphosphate</name>
        <dbReference type="ChEBI" id="CHEBI:128769"/>
    </ligand>
</feature>
<feature type="binding site" evidence="1">
    <location>
        <position position="271"/>
    </location>
    <ligand>
        <name>(2E)-4-hydroxy-3-methylbut-2-enyl diphosphate</name>
        <dbReference type="ChEBI" id="CHEBI:128753"/>
    </ligand>
</feature>
<feature type="binding site" evidence="1">
    <location>
        <position position="271"/>
    </location>
    <ligand>
        <name>dimethylallyl diphosphate</name>
        <dbReference type="ChEBI" id="CHEBI:57623"/>
    </ligand>
</feature>
<feature type="binding site" evidence="1">
    <location>
        <position position="271"/>
    </location>
    <ligand>
        <name>isopentenyl diphosphate</name>
        <dbReference type="ChEBI" id="CHEBI:128769"/>
    </ligand>
</feature>
<protein>
    <recommendedName>
        <fullName evidence="1">4-hydroxy-3-methylbut-2-enyl diphosphate reductase</fullName>
        <shortName evidence="1">HMBPP reductase</shortName>
        <ecNumber evidence="1">1.17.7.4</ecNumber>
    </recommendedName>
</protein>
<dbReference type="EC" id="1.17.7.4" evidence="1"/>
<dbReference type="EMBL" id="AP008229">
    <property type="protein sequence ID" value="BAE68269.1"/>
    <property type="molecule type" value="Genomic_DNA"/>
</dbReference>
<dbReference type="RefSeq" id="WP_011258401.1">
    <property type="nucleotide sequence ID" value="NC_007705.1"/>
</dbReference>
<dbReference type="SMR" id="Q2P5A8"/>
<dbReference type="KEGG" id="xom:XOO1514"/>
<dbReference type="HOGENOM" id="CLU_027486_1_0_6"/>
<dbReference type="UniPathway" id="UPA00056">
    <property type="reaction ID" value="UER00097"/>
</dbReference>
<dbReference type="UniPathway" id="UPA00059">
    <property type="reaction ID" value="UER00105"/>
</dbReference>
<dbReference type="GO" id="GO:0051539">
    <property type="term" value="F:4 iron, 4 sulfur cluster binding"/>
    <property type="evidence" value="ECO:0007669"/>
    <property type="project" value="UniProtKB-UniRule"/>
</dbReference>
<dbReference type="GO" id="GO:0051745">
    <property type="term" value="F:4-hydroxy-3-methylbut-2-enyl diphosphate reductase activity"/>
    <property type="evidence" value="ECO:0007669"/>
    <property type="project" value="UniProtKB-UniRule"/>
</dbReference>
<dbReference type="GO" id="GO:0046872">
    <property type="term" value="F:metal ion binding"/>
    <property type="evidence" value="ECO:0007669"/>
    <property type="project" value="UniProtKB-KW"/>
</dbReference>
<dbReference type="GO" id="GO:0050992">
    <property type="term" value="P:dimethylallyl diphosphate biosynthetic process"/>
    <property type="evidence" value="ECO:0007669"/>
    <property type="project" value="UniProtKB-UniRule"/>
</dbReference>
<dbReference type="GO" id="GO:0019288">
    <property type="term" value="P:isopentenyl diphosphate biosynthetic process, methylerythritol 4-phosphate pathway"/>
    <property type="evidence" value="ECO:0007669"/>
    <property type="project" value="UniProtKB-UniRule"/>
</dbReference>
<dbReference type="GO" id="GO:0016114">
    <property type="term" value="P:terpenoid biosynthetic process"/>
    <property type="evidence" value="ECO:0007669"/>
    <property type="project" value="UniProtKB-UniRule"/>
</dbReference>
<dbReference type="CDD" id="cd13944">
    <property type="entry name" value="lytB_ispH"/>
    <property type="match status" value="1"/>
</dbReference>
<dbReference type="Gene3D" id="3.40.50.11270">
    <property type="match status" value="1"/>
</dbReference>
<dbReference type="Gene3D" id="3.40.1010.20">
    <property type="entry name" value="4-hydroxy-3-methylbut-2-enyl diphosphate reductase, catalytic domain"/>
    <property type="match status" value="2"/>
</dbReference>
<dbReference type="HAMAP" id="MF_00191">
    <property type="entry name" value="IspH"/>
    <property type="match status" value="1"/>
</dbReference>
<dbReference type="InterPro" id="IPR003451">
    <property type="entry name" value="LytB/IspH"/>
</dbReference>
<dbReference type="NCBIfam" id="TIGR00216">
    <property type="entry name" value="ispH_lytB"/>
    <property type="match status" value="1"/>
</dbReference>
<dbReference type="NCBIfam" id="NF002188">
    <property type="entry name" value="PRK01045.1-2"/>
    <property type="match status" value="1"/>
</dbReference>
<dbReference type="NCBIfam" id="NF002190">
    <property type="entry name" value="PRK01045.1-4"/>
    <property type="match status" value="1"/>
</dbReference>
<dbReference type="PANTHER" id="PTHR30426">
    <property type="entry name" value="4-HYDROXY-3-METHYLBUT-2-ENYL DIPHOSPHATE REDUCTASE"/>
    <property type="match status" value="1"/>
</dbReference>
<dbReference type="PANTHER" id="PTHR30426:SF0">
    <property type="entry name" value="4-HYDROXY-3-METHYLBUT-2-ENYL DIPHOSPHATE REDUCTASE"/>
    <property type="match status" value="1"/>
</dbReference>
<dbReference type="Pfam" id="PF02401">
    <property type="entry name" value="LYTB"/>
    <property type="match status" value="1"/>
</dbReference>
<accession>Q2P5A8</accession>
<gene>
    <name evidence="1" type="primary">ispH</name>
    <name type="ordered locus">XOO1514</name>
</gene>
<evidence type="ECO:0000255" key="1">
    <source>
        <dbReference type="HAMAP-Rule" id="MF_00191"/>
    </source>
</evidence>
<comment type="function">
    <text evidence="1">Catalyzes the conversion of 1-hydroxy-2-methyl-2-(E)-butenyl 4-diphosphate (HMBPP) into a mixture of isopentenyl diphosphate (IPP) and dimethylallyl diphosphate (DMAPP). Acts in the terminal step of the DOXP/MEP pathway for isoprenoid precursor biosynthesis.</text>
</comment>
<comment type="catalytic activity">
    <reaction evidence="1">
        <text>isopentenyl diphosphate + 2 oxidized [2Fe-2S]-[ferredoxin] + H2O = (2E)-4-hydroxy-3-methylbut-2-enyl diphosphate + 2 reduced [2Fe-2S]-[ferredoxin] + 2 H(+)</text>
        <dbReference type="Rhea" id="RHEA:24488"/>
        <dbReference type="Rhea" id="RHEA-COMP:10000"/>
        <dbReference type="Rhea" id="RHEA-COMP:10001"/>
        <dbReference type="ChEBI" id="CHEBI:15377"/>
        <dbReference type="ChEBI" id="CHEBI:15378"/>
        <dbReference type="ChEBI" id="CHEBI:33737"/>
        <dbReference type="ChEBI" id="CHEBI:33738"/>
        <dbReference type="ChEBI" id="CHEBI:128753"/>
        <dbReference type="ChEBI" id="CHEBI:128769"/>
        <dbReference type="EC" id="1.17.7.4"/>
    </reaction>
</comment>
<comment type="catalytic activity">
    <reaction evidence="1">
        <text>dimethylallyl diphosphate + 2 oxidized [2Fe-2S]-[ferredoxin] + H2O = (2E)-4-hydroxy-3-methylbut-2-enyl diphosphate + 2 reduced [2Fe-2S]-[ferredoxin] + 2 H(+)</text>
        <dbReference type="Rhea" id="RHEA:24825"/>
        <dbReference type="Rhea" id="RHEA-COMP:10000"/>
        <dbReference type="Rhea" id="RHEA-COMP:10001"/>
        <dbReference type="ChEBI" id="CHEBI:15377"/>
        <dbReference type="ChEBI" id="CHEBI:15378"/>
        <dbReference type="ChEBI" id="CHEBI:33737"/>
        <dbReference type="ChEBI" id="CHEBI:33738"/>
        <dbReference type="ChEBI" id="CHEBI:57623"/>
        <dbReference type="ChEBI" id="CHEBI:128753"/>
        <dbReference type="EC" id="1.17.7.4"/>
    </reaction>
</comment>
<comment type="cofactor">
    <cofactor evidence="1">
        <name>[4Fe-4S] cluster</name>
        <dbReference type="ChEBI" id="CHEBI:49883"/>
    </cofactor>
    <text evidence="1">Binds 1 [4Fe-4S] cluster per subunit.</text>
</comment>
<comment type="pathway">
    <text evidence="1">Isoprenoid biosynthesis; dimethylallyl diphosphate biosynthesis; dimethylallyl diphosphate from (2E)-4-hydroxy-3-methylbutenyl diphosphate: step 1/1.</text>
</comment>
<comment type="pathway">
    <text evidence="1">Isoprenoid biosynthesis; isopentenyl diphosphate biosynthesis via DXP pathway; isopentenyl diphosphate from 1-deoxy-D-xylulose 5-phosphate: step 6/6.</text>
</comment>
<comment type="similarity">
    <text evidence="1">Belongs to the IspH family.</text>
</comment>
<name>ISPH_XANOM</name>
<sequence length="316" mass="34716">MYVLLANPRGFCAGVDRAIEIVKRAIETLGAPIYVRHEVVHNRFVVDDLKQRGAIFVEELDEVPDDATVIFSAHGVPQAVRQEAERRGLKVFDATCPLVTKVHFEVARHCRAGRDVVLIGHAGHPEVEGTMGQWSRERGPGTIYLVEDIEQVATLDVRQPENLAYTTQTTLSVDDTMGIIEALRARYPAMQGPRHDDICYATQNRQDAVRDLARQCDLVLVVGSPNSSNSNRLSELARRDGVESYLIDNASEIDPAWIVGKQHIGLTAGASAPQVLVDGVLARLRELGASGVSELEGEPESMVFALPKELRLRLVG</sequence>
<organism>
    <name type="scientific">Xanthomonas oryzae pv. oryzae (strain MAFF 311018)</name>
    <dbReference type="NCBI Taxonomy" id="342109"/>
    <lineage>
        <taxon>Bacteria</taxon>
        <taxon>Pseudomonadati</taxon>
        <taxon>Pseudomonadota</taxon>
        <taxon>Gammaproteobacteria</taxon>
        <taxon>Lysobacterales</taxon>
        <taxon>Lysobacteraceae</taxon>
        <taxon>Xanthomonas</taxon>
    </lineage>
</organism>